<accession>Q9HQK6</accession>
<gene>
    <name evidence="1" type="primary">dphB</name>
    <name type="ordered locus">VNG_1118G</name>
</gene>
<proteinExistence type="inferred from homology"/>
<evidence type="ECO:0000255" key="1">
    <source>
        <dbReference type="HAMAP-Rule" id="MF_01084"/>
    </source>
</evidence>
<evidence type="ECO:0000305" key="2"/>
<dbReference type="EC" id="2.1.1.98" evidence="1"/>
<dbReference type="EMBL" id="AE004437">
    <property type="protein sequence ID" value="AAG19507.1"/>
    <property type="status" value="ALT_INIT"/>
    <property type="molecule type" value="Genomic_DNA"/>
</dbReference>
<dbReference type="PIR" id="G84267">
    <property type="entry name" value="G84267"/>
</dbReference>
<dbReference type="SMR" id="Q9HQK6"/>
<dbReference type="FunCoup" id="Q9HQK6">
    <property type="interactions" value="162"/>
</dbReference>
<dbReference type="STRING" id="64091.VNG_1118G"/>
<dbReference type="PaxDb" id="64091-VNG_1118G"/>
<dbReference type="KEGG" id="hal:VNG_1118G"/>
<dbReference type="PATRIC" id="fig|64091.14.peg.853"/>
<dbReference type="HOGENOM" id="CLU_066040_0_0_2"/>
<dbReference type="InParanoid" id="Q9HQK6"/>
<dbReference type="OrthoDB" id="39139at2157"/>
<dbReference type="PhylomeDB" id="Q9HQK6"/>
<dbReference type="UniPathway" id="UPA00559"/>
<dbReference type="Proteomes" id="UP000000554">
    <property type="component" value="Chromosome"/>
</dbReference>
<dbReference type="GO" id="GO:0004164">
    <property type="term" value="F:diphthine synthase activity"/>
    <property type="evidence" value="ECO:0007669"/>
    <property type="project" value="UniProtKB-UniRule"/>
</dbReference>
<dbReference type="GO" id="GO:0032259">
    <property type="term" value="P:methylation"/>
    <property type="evidence" value="ECO:0007669"/>
    <property type="project" value="UniProtKB-KW"/>
</dbReference>
<dbReference type="GO" id="GO:0017183">
    <property type="term" value="P:protein histidyl modification to diphthamide"/>
    <property type="evidence" value="ECO:0007669"/>
    <property type="project" value="UniProtKB-UniRule"/>
</dbReference>
<dbReference type="CDD" id="cd11647">
    <property type="entry name" value="DHP5_DphB"/>
    <property type="match status" value="1"/>
</dbReference>
<dbReference type="Gene3D" id="3.40.1010.10">
    <property type="entry name" value="Cobalt-precorrin-4 Transmethylase, Domain 1"/>
    <property type="match status" value="1"/>
</dbReference>
<dbReference type="Gene3D" id="3.30.950.10">
    <property type="entry name" value="Methyltransferase, Cobalt-precorrin-4 Transmethylase, Domain 2"/>
    <property type="match status" value="1"/>
</dbReference>
<dbReference type="HAMAP" id="MF_01084">
    <property type="entry name" value="Diphthine_synth"/>
    <property type="match status" value="1"/>
</dbReference>
<dbReference type="InterPro" id="IPR000878">
    <property type="entry name" value="4pyrrol_Mease"/>
</dbReference>
<dbReference type="InterPro" id="IPR035996">
    <property type="entry name" value="4pyrrol_Methylase_sf"/>
</dbReference>
<dbReference type="InterPro" id="IPR014777">
    <property type="entry name" value="4pyrrole_Mease_sub1"/>
</dbReference>
<dbReference type="InterPro" id="IPR014776">
    <property type="entry name" value="4pyrrole_Mease_sub2"/>
</dbReference>
<dbReference type="InterPro" id="IPR004551">
    <property type="entry name" value="Dphthn_synthase"/>
</dbReference>
<dbReference type="NCBIfam" id="TIGR00522">
    <property type="entry name" value="dph5"/>
    <property type="match status" value="1"/>
</dbReference>
<dbReference type="PANTHER" id="PTHR10882:SF0">
    <property type="entry name" value="DIPHTHINE METHYL ESTER SYNTHASE"/>
    <property type="match status" value="1"/>
</dbReference>
<dbReference type="PANTHER" id="PTHR10882">
    <property type="entry name" value="DIPHTHINE SYNTHASE"/>
    <property type="match status" value="1"/>
</dbReference>
<dbReference type="Pfam" id="PF00590">
    <property type="entry name" value="TP_methylase"/>
    <property type="match status" value="1"/>
</dbReference>
<dbReference type="PIRSF" id="PIRSF036432">
    <property type="entry name" value="Diphthine_synth"/>
    <property type="match status" value="1"/>
</dbReference>
<dbReference type="SUPFAM" id="SSF53790">
    <property type="entry name" value="Tetrapyrrole methylase"/>
    <property type="match status" value="1"/>
</dbReference>
<feature type="chain" id="PRO_0000156116" description="Diphthine synthase">
    <location>
        <begin position="1"/>
        <end position="260"/>
    </location>
</feature>
<feature type="binding site" evidence="1">
    <location>
        <position position="9"/>
    </location>
    <ligand>
        <name>S-adenosyl-L-methionine</name>
        <dbReference type="ChEBI" id="CHEBI:59789"/>
    </ligand>
</feature>
<feature type="binding site" evidence="1">
    <location>
        <position position="85"/>
    </location>
    <ligand>
        <name>S-adenosyl-L-methionine</name>
        <dbReference type="ChEBI" id="CHEBI:59789"/>
    </ligand>
</feature>
<feature type="binding site" evidence="1">
    <location>
        <position position="88"/>
    </location>
    <ligand>
        <name>S-adenosyl-L-methionine</name>
        <dbReference type="ChEBI" id="CHEBI:59789"/>
    </ligand>
</feature>
<feature type="binding site" evidence="1">
    <location>
        <begin position="113"/>
        <end position="114"/>
    </location>
    <ligand>
        <name>S-adenosyl-L-methionine</name>
        <dbReference type="ChEBI" id="CHEBI:59789"/>
    </ligand>
</feature>
<feature type="binding site" evidence="1">
    <location>
        <position position="168"/>
    </location>
    <ligand>
        <name>S-adenosyl-L-methionine</name>
        <dbReference type="ChEBI" id="CHEBI:59789"/>
    </ligand>
</feature>
<feature type="binding site" evidence="1">
    <location>
        <position position="208"/>
    </location>
    <ligand>
        <name>S-adenosyl-L-methionine</name>
        <dbReference type="ChEBI" id="CHEBI:59789"/>
    </ligand>
</feature>
<feature type="binding site" evidence="1">
    <location>
        <position position="233"/>
    </location>
    <ligand>
        <name>S-adenosyl-L-methionine</name>
        <dbReference type="ChEBI" id="CHEBI:59789"/>
    </ligand>
</feature>
<reference key="1">
    <citation type="journal article" date="2000" name="Proc. Natl. Acad. Sci. U.S.A.">
        <title>Genome sequence of Halobacterium species NRC-1.</title>
        <authorList>
            <person name="Ng W.V."/>
            <person name="Kennedy S.P."/>
            <person name="Mahairas G.G."/>
            <person name="Berquist B."/>
            <person name="Pan M."/>
            <person name="Shukla H.D."/>
            <person name="Lasky S.R."/>
            <person name="Baliga N.S."/>
            <person name="Thorsson V."/>
            <person name="Sbrogna J."/>
            <person name="Swartzell S."/>
            <person name="Weir D."/>
            <person name="Hall J."/>
            <person name="Dahl T.A."/>
            <person name="Welti R."/>
            <person name="Goo Y.A."/>
            <person name="Leithauser B."/>
            <person name="Keller K."/>
            <person name="Cruz R."/>
            <person name="Danson M.J."/>
            <person name="Hough D.W."/>
            <person name="Maddocks D.G."/>
            <person name="Jablonski P.E."/>
            <person name="Krebs M.P."/>
            <person name="Angevine C.M."/>
            <person name="Dale H."/>
            <person name="Isenbarger T.A."/>
            <person name="Peck R.F."/>
            <person name="Pohlschroder M."/>
            <person name="Spudich J.L."/>
            <person name="Jung K.-H."/>
            <person name="Alam M."/>
            <person name="Freitas T."/>
            <person name="Hou S."/>
            <person name="Daniels C.J."/>
            <person name="Dennis P.P."/>
            <person name="Omer A.D."/>
            <person name="Ebhardt H."/>
            <person name="Lowe T.M."/>
            <person name="Liang P."/>
            <person name="Riley M."/>
            <person name="Hood L."/>
            <person name="DasSarma S."/>
        </authorList>
    </citation>
    <scope>NUCLEOTIDE SEQUENCE [LARGE SCALE GENOMIC DNA]</scope>
    <source>
        <strain>ATCC 700922 / JCM 11081 / NRC-1</strain>
    </source>
</reference>
<sequence>MLTFVGLGLYDEASVTVAGRDAIAAADRVFAEFYTSRLIGTDVAALEAHHDTTIERRDRAGVEQHPEPILDAAADGDAVFLTAGDTMISTTHVDLRMRAADRGIDTRVIHAPTAASAAAGLTGLQNYRFGKATTLPFPWAHGADGVPGSVTDTIEANRERGLHTLVYLDIKVDHPRVDGDAYMTASQAADLLATNWDADALGVVVARAGAPDATVRADRLGALADADFGSPLHLLVVPGSLHHIERDALRELAGAPADAL</sequence>
<name>DPHB_HALSA</name>
<organism>
    <name type="scientific">Halobacterium salinarum (strain ATCC 700922 / JCM 11081 / NRC-1)</name>
    <name type="common">Halobacterium halobium</name>
    <dbReference type="NCBI Taxonomy" id="64091"/>
    <lineage>
        <taxon>Archaea</taxon>
        <taxon>Methanobacteriati</taxon>
        <taxon>Methanobacteriota</taxon>
        <taxon>Stenosarchaea group</taxon>
        <taxon>Halobacteria</taxon>
        <taxon>Halobacteriales</taxon>
        <taxon>Halobacteriaceae</taxon>
        <taxon>Halobacterium</taxon>
        <taxon>Halobacterium salinarum NRC-34001</taxon>
    </lineage>
</organism>
<keyword id="KW-0489">Methyltransferase</keyword>
<keyword id="KW-1185">Reference proteome</keyword>
<keyword id="KW-0949">S-adenosyl-L-methionine</keyword>
<keyword id="KW-0808">Transferase</keyword>
<comment type="function">
    <text evidence="1">S-adenosyl-L-methionine-dependent methyltransferase that catalyzes the trimethylation of the amino group of the modified target histidine residue in translation elongation factor 2 (EF-2), to form an intermediate called diphthine. The three successive methylation reactions represent the second step of diphthamide biosynthesis.</text>
</comment>
<comment type="catalytic activity">
    <reaction evidence="1">
        <text>2-[(3S)-amino-3-carboxypropyl]-L-histidyl-[translation elongation factor 2] + 3 S-adenosyl-L-methionine = diphthine-[translation elongation factor 2] + 3 S-adenosyl-L-homocysteine + 3 H(+)</text>
        <dbReference type="Rhea" id="RHEA:36415"/>
        <dbReference type="Rhea" id="RHEA-COMP:9749"/>
        <dbReference type="Rhea" id="RHEA-COMP:10172"/>
        <dbReference type="ChEBI" id="CHEBI:15378"/>
        <dbReference type="ChEBI" id="CHEBI:57856"/>
        <dbReference type="ChEBI" id="CHEBI:59789"/>
        <dbReference type="ChEBI" id="CHEBI:73995"/>
        <dbReference type="ChEBI" id="CHEBI:82696"/>
        <dbReference type="EC" id="2.1.1.98"/>
    </reaction>
</comment>
<comment type="pathway">
    <text evidence="1">Protein modification; peptidyl-diphthamide biosynthesis.</text>
</comment>
<comment type="subunit">
    <text evidence="1">Homodimer.</text>
</comment>
<comment type="similarity">
    <text evidence="1">Belongs to the diphthine synthase family.</text>
</comment>
<comment type="sequence caution" evidence="2">
    <conflict type="erroneous initiation">
        <sequence resource="EMBL-CDS" id="AAG19507"/>
    </conflict>
</comment>
<protein>
    <recommendedName>
        <fullName evidence="1">Diphthine synthase</fullName>
        <ecNumber evidence="1">2.1.1.98</ecNumber>
    </recommendedName>
    <alternativeName>
        <fullName evidence="1">Diphthamide biosynthesis methyltransferase</fullName>
    </alternativeName>
</protein>